<reference key="1">
    <citation type="journal article" date="2007" name="ISME J.">
        <title>Population level functional diversity in a microbial community revealed by comparative genomic and metagenomic analyses.</title>
        <authorList>
            <person name="Bhaya D."/>
            <person name="Grossman A.R."/>
            <person name="Steunou A.-S."/>
            <person name="Khuri N."/>
            <person name="Cohan F.M."/>
            <person name="Hamamura N."/>
            <person name="Melendrez M.C."/>
            <person name="Bateson M.M."/>
            <person name="Ward D.M."/>
            <person name="Heidelberg J.F."/>
        </authorList>
    </citation>
    <scope>NUCLEOTIDE SEQUENCE [LARGE SCALE GENOMIC DNA]</scope>
    <source>
        <strain>JA-2-3B'a(2-13)</strain>
    </source>
</reference>
<organism>
    <name type="scientific">Synechococcus sp. (strain JA-2-3B'a(2-13))</name>
    <name type="common">Cyanobacteria bacterium Yellowstone B-Prime</name>
    <dbReference type="NCBI Taxonomy" id="321332"/>
    <lineage>
        <taxon>Bacteria</taxon>
        <taxon>Bacillati</taxon>
        <taxon>Cyanobacteriota</taxon>
        <taxon>Cyanophyceae</taxon>
        <taxon>Synechococcales</taxon>
        <taxon>Synechococcaceae</taxon>
        <taxon>Synechococcus</taxon>
    </lineage>
</organism>
<keyword id="KW-1185">Reference proteome</keyword>
<keyword id="KW-0687">Ribonucleoprotein</keyword>
<keyword id="KW-0689">Ribosomal protein</keyword>
<sequence length="136" mass="14020">MPSERVAKILEELKALSLLEASELVKAIEETFGVSAAAPAGGMVMAAPVAAAAAAPAAAPEPVEEQTAFDVILEAVPADKKIAILKVVRELTGLGLKDAKDLVEAAPKPVKEGVAKEEANDIKKKLEEAGATVKIK</sequence>
<protein>
    <recommendedName>
        <fullName evidence="1">Large ribosomal subunit protein bL12</fullName>
    </recommendedName>
    <alternativeName>
        <fullName evidence="2">50S ribosomal protein L7/L12</fullName>
    </alternativeName>
</protein>
<dbReference type="EMBL" id="CP000240">
    <property type="protein sequence ID" value="ABD02199.1"/>
    <property type="molecule type" value="Genomic_DNA"/>
</dbReference>
<dbReference type="RefSeq" id="WP_011432852.1">
    <property type="nucleotide sequence ID" value="NC_007776.1"/>
</dbReference>
<dbReference type="SMR" id="Q2JM48"/>
<dbReference type="STRING" id="321332.CYB_1224"/>
<dbReference type="KEGG" id="cyb:CYB_1224"/>
<dbReference type="eggNOG" id="COG0222">
    <property type="taxonomic scope" value="Bacteria"/>
</dbReference>
<dbReference type="HOGENOM" id="CLU_086499_3_0_3"/>
<dbReference type="OrthoDB" id="9811748at2"/>
<dbReference type="Proteomes" id="UP000001938">
    <property type="component" value="Chromosome"/>
</dbReference>
<dbReference type="GO" id="GO:0022625">
    <property type="term" value="C:cytosolic large ribosomal subunit"/>
    <property type="evidence" value="ECO:0007669"/>
    <property type="project" value="TreeGrafter"/>
</dbReference>
<dbReference type="GO" id="GO:0003729">
    <property type="term" value="F:mRNA binding"/>
    <property type="evidence" value="ECO:0007669"/>
    <property type="project" value="TreeGrafter"/>
</dbReference>
<dbReference type="GO" id="GO:0003735">
    <property type="term" value="F:structural constituent of ribosome"/>
    <property type="evidence" value="ECO:0007669"/>
    <property type="project" value="InterPro"/>
</dbReference>
<dbReference type="GO" id="GO:0006412">
    <property type="term" value="P:translation"/>
    <property type="evidence" value="ECO:0007669"/>
    <property type="project" value="UniProtKB-UniRule"/>
</dbReference>
<dbReference type="CDD" id="cd00387">
    <property type="entry name" value="Ribosomal_L7_L12"/>
    <property type="match status" value="1"/>
</dbReference>
<dbReference type="FunFam" id="3.30.1390.10:FF:000001">
    <property type="entry name" value="50S ribosomal protein L7/L12"/>
    <property type="match status" value="1"/>
</dbReference>
<dbReference type="Gene3D" id="3.30.1390.10">
    <property type="match status" value="1"/>
</dbReference>
<dbReference type="Gene3D" id="1.20.5.710">
    <property type="entry name" value="Single helix bin"/>
    <property type="match status" value="1"/>
</dbReference>
<dbReference type="HAMAP" id="MF_00368">
    <property type="entry name" value="Ribosomal_bL12"/>
    <property type="match status" value="1"/>
</dbReference>
<dbReference type="InterPro" id="IPR000206">
    <property type="entry name" value="Ribosomal_bL12"/>
</dbReference>
<dbReference type="InterPro" id="IPR013823">
    <property type="entry name" value="Ribosomal_bL12_C"/>
</dbReference>
<dbReference type="InterPro" id="IPR014719">
    <property type="entry name" value="Ribosomal_bL12_C/ClpS-like"/>
</dbReference>
<dbReference type="InterPro" id="IPR008932">
    <property type="entry name" value="Ribosomal_bL12_oligo"/>
</dbReference>
<dbReference type="InterPro" id="IPR036235">
    <property type="entry name" value="Ribosomal_bL12_oligo_N_sf"/>
</dbReference>
<dbReference type="NCBIfam" id="TIGR00855">
    <property type="entry name" value="L12"/>
    <property type="match status" value="1"/>
</dbReference>
<dbReference type="PANTHER" id="PTHR45987">
    <property type="entry name" value="39S RIBOSOMAL PROTEIN L12"/>
    <property type="match status" value="1"/>
</dbReference>
<dbReference type="PANTHER" id="PTHR45987:SF4">
    <property type="entry name" value="LARGE RIBOSOMAL SUBUNIT PROTEIN BL12M"/>
    <property type="match status" value="1"/>
</dbReference>
<dbReference type="Pfam" id="PF00542">
    <property type="entry name" value="Ribosomal_L12"/>
    <property type="match status" value="1"/>
</dbReference>
<dbReference type="Pfam" id="PF16320">
    <property type="entry name" value="Ribosomal_L12_N"/>
    <property type="match status" value="1"/>
</dbReference>
<dbReference type="SUPFAM" id="SSF54736">
    <property type="entry name" value="ClpS-like"/>
    <property type="match status" value="1"/>
</dbReference>
<dbReference type="SUPFAM" id="SSF48300">
    <property type="entry name" value="Ribosomal protein L7/12, oligomerisation (N-terminal) domain"/>
    <property type="match status" value="1"/>
</dbReference>
<gene>
    <name evidence="1" type="primary">rplL</name>
    <name evidence="1" type="synonym">rpl12</name>
    <name type="ordered locus">CYB_1224</name>
</gene>
<comment type="function">
    <text evidence="1">Forms part of the ribosomal stalk which helps the ribosome interact with GTP-bound translation factors. Is thus essential for accurate translation.</text>
</comment>
<comment type="subunit">
    <text evidence="1">Homodimer. Part of the ribosomal stalk of the 50S ribosomal subunit. Forms a multimeric L10(L12)X complex, where L10 forms an elongated spine to which 2 to 4 L12 dimers bind in a sequential fashion. Binds GTP-bound translation factors.</text>
</comment>
<comment type="similarity">
    <text evidence="1">Belongs to the bacterial ribosomal protein bL12 family.</text>
</comment>
<accession>Q2JM48</accession>
<evidence type="ECO:0000255" key="1">
    <source>
        <dbReference type="HAMAP-Rule" id="MF_00368"/>
    </source>
</evidence>
<evidence type="ECO:0000305" key="2"/>
<name>RL7_SYNJB</name>
<feature type="chain" id="PRO_0000243511" description="Large ribosomal subunit protein bL12">
    <location>
        <begin position="1"/>
        <end position="136"/>
    </location>
</feature>
<proteinExistence type="inferred from homology"/>